<gene>
    <name evidence="1" type="primary">rpsT</name>
    <name type="ordered locus">Gura_3131</name>
</gene>
<reference key="1">
    <citation type="submission" date="2007-05" db="EMBL/GenBank/DDBJ databases">
        <title>Complete sequence of Geobacter uraniireducens Rf4.</title>
        <authorList>
            <consortium name="US DOE Joint Genome Institute"/>
            <person name="Copeland A."/>
            <person name="Lucas S."/>
            <person name="Lapidus A."/>
            <person name="Barry K."/>
            <person name="Detter J.C."/>
            <person name="Glavina del Rio T."/>
            <person name="Hammon N."/>
            <person name="Israni S."/>
            <person name="Dalin E."/>
            <person name="Tice H."/>
            <person name="Pitluck S."/>
            <person name="Chertkov O."/>
            <person name="Brettin T."/>
            <person name="Bruce D."/>
            <person name="Han C."/>
            <person name="Schmutz J."/>
            <person name="Larimer F."/>
            <person name="Land M."/>
            <person name="Hauser L."/>
            <person name="Kyrpides N."/>
            <person name="Mikhailova N."/>
            <person name="Shelobolina E."/>
            <person name="Aklujkar M."/>
            <person name="Lovley D."/>
            <person name="Richardson P."/>
        </authorList>
    </citation>
    <scope>NUCLEOTIDE SEQUENCE [LARGE SCALE GENOMIC DNA]</scope>
    <source>
        <strain>ATCC BAA-1134 / JCM 13001 / Rf4</strain>
    </source>
</reference>
<feature type="chain" id="PRO_1000081431" description="Small ribosomal subunit protein bS20">
    <location>
        <begin position="1"/>
        <end position="87"/>
    </location>
</feature>
<feature type="region of interest" description="Disordered" evidence="2">
    <location>
        <begin position="1"/>
        <end position="23"/>
    </location>
</feature>
<feature type="compositionally biased region" description="Basic residues" evidence="2">
    <location>
        <begin position="1"/>
        <end position="11"/>
    </location>
</feature>
<dbReference type="EMBL" id="CP000698">
    <property type="protein sequence ID" value="ABQ27292.1"/>
    <property type="molecule type" value="Genomic_DNA"/>
</dbReference>
<dbReference type="RefSeq" id="WP_011939958.1">
    <property type="nucleotide sequence ID" value="NC_009483.1"/>
</dbReference>
<dbReference type="SMR" id="A5G674"/>
<dbReference type="STRING" id="351605.Gura_3131"/>
<dbReference type="KEGG" id="gur:Gura_3131"/>
<dbReference type="HOGENOM" id="CLU_160655_3_1_7"/>
<dbReference type="OrthoDB" id="9807974at2"/>
<dbReference type="Proteomes" id="UP000006695">
    <property type="component" value="Chromosome"/>
</dbReference>
<dbReference type="GO" id="GO:0005829">
    <property type="term" value="C:cytosol"/>
    <property type="evidence" value="ECO:0007669"/>
    <property type="project" value="TreeGrafter"/>
</dbReference>
<dbReference type="GO" id="GO:0015935">
    <property type="term" value="C:small ribosomal subunit"/>
    <property type="evidence" value="ECO:0007669"/>
    <property type="project" value="TreeGrafter"/>
</dbReference>
<dbReference type="GO" id="GO:0070181">
    <property type="term" value="F:small ribosomal subunit rRNA binding"/>
    <property type="evidence" value="ECO:0007669"/>
    <property type="project" value="TreeGrafter"/>
</dbReference>
<dbReference type="GO" id="GO:0003735">
    <property type="term" value="F:structural constituent of ribosome"/>
    <property type="evidence" value="ECO:0007669"/>
    <property type="project" value="InterPro"/>
</dbReference>
<dbReference type="GO" id="GO:0006412">
    <property type="term" value="P:translation"/>
    <property type="evidence" value="ECO:0007669"/>
    <property type="project" value="UniProtKB-UniRule"/>
</dbReference>
<dbReference type="FunFam" id="1.20.58.110:FF:000001">
    <property type="entry name" value="30S ribosomal protein S20"/>
    <property type="match status" value="1"/>
</dbReference>
<dbReference type="Gene3D" id="1.20.58.110">
    <property type="entry name" value="Ribosomal protein S20"/>
    <property type="match status" value="1"/>
</dbReference>
<dbReference type="HAMAP" id="MF_00500">
    <property type="entry name" value="Ribosomal_bS20"/>
    <property type="match status" value="1"/>
</dbReference>
<dbReference type="InterPro" id="IPR002583">
    <property type="entry name" value="Ribosomal_bS20"/>
</dbReference>
<dbReference type="InterPro" id="IPR036510">
    <property type="entry name" value="Ribosomal_bS20_sf"/>
</dbReference>
<dbReference type="NCBIfam" id="TIGR00029">
    <property type="entry name" value="S20"/>
    <property type="match status" value="1"/>
</dbReference>
<dbReference type="PANTHER" id="PTHR33398">
    <property type="entry name" value="30S RIBOSOMAL PROTEIN S20"/>
    <property type="match status" value="1"/>
</dbReference>
<dbReference type="PANTHER" id="PTHR33398:SF1">
    <property type="entry name" value="SMALL RIBOSOMAL SUBUNIT PROTEIN BS20C"/>
    <property type="match status" value="1"/>
</dbReference>
<dbReference type="Pfam" id="PF01649">
    <property type="entry name" value="Ribosomal_S20p"/>
    <property type="match status" value="1"/>
</dbReference>
<dbReference type="SUPFAM" id="SSF46992">
    <property type="entry name" value="Ribosomal protein S20"/>
    <property type="match status" value="1"/>
</dbReference>
<comment type="function">
    <text evidence="1">Binds directly to 16S ribosomal RNA.</text>
</comment>
<comment type="similarity">
    <text evidence="1">Belongs to the bacterial ribosomal protein bS20 family.</text>
</comment>
<name>RS20_GEOUR</name>
<organism>
    <name type="scientific">Geotalea uraniireducens (strain Rf4)</name>
    <name type="common">Geobacter uraniireducens</name>
    <dbReference type="NCBI Taxonomy" id="351605"/>
    <lineage>
        <taxon>Bacteria</taxon>
        <taxon>Pseudomonadati</taxon>
        <taxon>Thermodesulfobacteriota</taxon>
        <taxon>Desulfuromonadia</taxon>
        <taxon>Geobacterales</taxon>
        <taxon>Geobacteraceae</taxon>
        <taxon>Geotalea</taxon>
    </lineage>
</organism>
<evidence type="ECO:0000255" key="1">
    <source>
        <dbReference type="HAMAP-Rule" id="MF_00500"/>
    </source>
</evidence>
<evidence type="ECO:0000256" key="2">
    <source>
        <dbReference type="SAM" id="MobiDB-lite"/>
    </source>
</evidence>
<evidence type="ECO:0000305" key="3"/>
<protein>
    <recommendedName>
        <fullName evidence="1">Small ribosomal subunit protein bS20</fullName>
    </recommendedName>
    <alternativeName>
        <fullName evidence="3">30S ribosomal protein S20</fullName>
    </alternativeName>
</protein>
<proteinExistence type="inferred from homology"/>
<sequence>MANHKSALKRIKQTEKRTERNRHVRSTLRTFIKRVREAAAAKDAALAKEALAAAIPVIDTAASKGVIHSSNASRNISRLTKLVNTLG</sequence>
<accession>A5G674</accession>
<keyword id="KW-1185">Reference proteome</keyword>
<keyword id="KW-0687">Ribonucleoprotein</keyword>
<keyword id="KW-0689">Ribosomal protein</keyword>
<keyword id="KW-0694">RNA-binding</keyword>
<keyword id="KW-0699">rRNA-binding</keyword>